<keyword id="KW-0256">Endoplasmic reticulum</keyword>
<keyword id="KW-0325">Glycoprotein</keyword>
<keyword id="KW-0378">Hydrolase</keyword>
<keyword id="KW-0472">Membrane</keyword>
<keyword id="KW-0645">Protease</keyword>
<keyword id="KW-1185">Reference proteome</keyword>
<keyword id="KW-0735">Signal-anchor</keyword>
<keyword id="KW-0812">Transmembrane</keyword>
<keyword id="KW-1133">Transmembrane helix</keyword>
<reference key="1">
    <citation type="journal article" date="2009" name="Genome Res.">
        <title>Comparative genomic analyses of the human fungal pathogens Coccidioides and their relatives.</title>
        <authorList>
            <person name="Sharpton T.J."/>
            <person name="Stajich J.E."/>
            <person name="Rounsley S.D."/>
            <person name="Gardner M.J."/>
            <person name="Wortman J.R."/>
            <person name="Jordar V.S."/>
            <person name="Maiti R."/>
            <person name="Kodira C.D."/>
            <person name="Neafsey D.E."/>
            <person name="Zeng Q."/>
            <person name="Hung C.-Y."/>
            <person name="McMahan C."/>
            <person name="Muszewska A."/>
            <person name="Grynberg M."/>
            <person name="Mandel M.A."/>
            <person name="Kellner E.M."/>
            <person name="Barker B.M."/>
            <person name="Galgiani J.N."/>
            <person name="Orbach M.J."/>
            <person name="Kirkland T.N."/>
            <person name="Cole G.T."/>
            <person name="Henn M.R."/>
            <person name="Birren B.W."/>
            <person name="Taylor J.W."/>
        </authorList>
    </citation>
    <scope>NUCLEOTIDE SEQUENCE [LARGE SCALE GENOMIC DNA]</scope>
    <source>
        <strain>UAMH 1704</strain>
    </source>
</reference>
<organism>
    <name type="scientific">Uncinocarpus reesii (strain UAMH 1704)</name>
    <dbReference type="NCBI Taxonomy" id="336963"/>
    <lineage>
        <taxon>Eukaryota</taxon>
        <taxon>Fungi</taxon>
        <taxon>Dikarya</taxon>
        <taxon>Ascomycota</taxon>
        <taxon>Pezizomycotina</taxon>
        <taxon>Eurotiomycetes</taxon>
        <taxon>Eurotiomycetidae</taxon>
        <taxon>Onygenales</taxon>
        <taxon>Onygenaceae</taxon>
        <taxon>Uncinocarpus</taxon>
    </lineage>
</organism>
<comment type="function">
    <text evidence="1 2">Catalytic component of the signal peptidase complex (SPC) which catalyzes the cleavage of N-terminal signal sequences from nascent proteins as they are translocated into the lumen of the endoplasmic reticulum (By similarity). Specifically cleaves N-terminal signal peptides that contain a hydrophobic alpha-helix (h-region) shorter than 18-20 amino acids (By similarity).</text>
</comment>
<comment type="catalytic activity">
    <reaction evidence="1">
        <text>Cleavage of hydrophobic, N-terminal signal or leader sequences from secreted and periplasmic proteins.</text>
        <dbReference type="EC" id="3.4.21.89"/>
    </reaction>
</comment>
<comment type="subunit">
    <text evidence="1 2">Component of the signal peptidase complex (SPC) composed of a catalytic subunit SEC11 and three accessory subunits SPC1, SPC2 and SPC3 (By similarity). The complex induces a local thinning of the ER membrane which is used to measure the length of the signal peptide (SP) h-region of protein substrates. This ensures the selectivity of the complex towards h-regions shorter than 18-20 amino acids (By similarity). SPC associates with the translocon complex (By similarity).</text>
</comment>
<comment type="subcellular location">
    <subcellularLocation>
        <location evidence="1">Endoplasmic reticulum membrane</location>
        <topology evidence="1">Single-pass type II membrane protein</topology>
    </subcellularLocation>
</comment>
<comment type="domain">
    <text evidence="2">The C-terminal short (CTS) helix is essential for catalytic activity. It may be accommodated as a transmembrane helix in the thinned membrane environment of the complex, similarly to the signal peptide in the complex substrates.</text>
</comment>
<comment type="similarity">
    <text evidence="5">Belongs to the peptidase S26B family.</text>
</comment>
<dbReference type="EC" id="3.4.21.89" evidence="1"/>
<dbReference type="EMBL" id="CH476619">
    <property type="protein sequence ID" value="EEP82410.1"/>
    <property type="molecule type" value="Genomic_DNA"/>
</dbReference>
<dbReference type="RefSeq" id="XP_002582502.1">
    <property type="nucleotide sequence ID" value="XM_002582456.1"/>
</dbReference>
<dbReference type="SMR" id="C4JYM4"/>
<dbReference type="FunCoup" id="C4JYM4">
    <property type="interactions" value="569"/>
</dbReference>
<dbReference type="STRING" id="336963.C4JYM4"/>
<dbReference type="MEROPS" id="S26.010"/>
<dbReference type="GlyCosmos" id="C4JYM4">
    <property type="glycosylation" value="1 site, No reported glycans"/>
</dbReference>
<dbReference type="GeneID" id="8438820"/>
<dbReference type="KEGG" id="ure:UREG_07275"/>
<dbReference type="VEuPathDB" id="FungiDB:UREG_07275"/>
<dbReference type="eggNOG" id="KOG3342">
    <property type="taxonomic scope" value="Eukaryota"/>
</dbReference>
<dbReference type="HOGENOM" id="CLU_089996_0_0_1"/>
<dbReference type="InParanoid" id="C4JYM4"/>
<dbReference type="OMA" id="ILMNEYP"/>
<dbReference type="OrthoDB" id="10257561at2759"/>
<dbReference type="Proteomes" id="UP000002058">
    <property type="component" value="Unassembled WGS sequence"/>
</dbReference>
<dbReference type="GO" id="GO:0005787">
    <property type="term" value="C:signal peptidase complex"/>
    <property type="evidence" value="ECO:0007669"/>
    <property type="project" value="EnsemblFungi"/>
</dbReference>
<dbReference type="GO" id="GO:0004252">
    <property type="term" value="F:serine-type endopeptidase activity"/>
    <property type="evidence" value="ECO:0007669"/>
    <property type="project" value="UniProtKB-EC"/>
</dbReference>
<dbReference type="GO" id="GO:0045047">
    <property type="term" value="P:protein targeting to ER"/>
    <property type="evidence" value="ECO:0007669"/>
    <property type="project" value="EnsemblFungi"/>
</dbReference>
<dbReference type="GO" id="GO:0006465">
    <property type="term" value="P:signal peptide processing"/>
    <property type="evidence" value="ECO:0007669"/>
    <property type="project" value="EnsemblFungi"/>
</dbReference>
<dbReference type="CDD" id="cd06530">
    <property type="entry name" value="S26_SPase_I"/>
    <property type="match status" value="1"/>
</dbReference>
<dbReference type="InterPro" id="IPR036286">
    <property type="entry name" value="LexA/Signal_pep-like_sf"/>
</dbReference>
<dbReference type="InterPro" id="IPR019756">
    <property type="entry name" value="Pept_S26A_signal_pept_1_Ser-AS"/>
</dbReference>
<dbReference type="InterPro" id="IPR019533">
    <property type="entry name" value="Peptidase_S26"/>
</dbReference>
<dbReference type="InterPro" id="IPR001733">
    <property type="entry name" value="Peptidase_S26B"/>
</dbReference>
<dbReference type="NCBIfam" id="TIGR02228">
    <property type="entry name" value="sigpep_I_arch"/>
    <property type="match status" value="1"/>
</dbReference>
<dbReference type="PANTHER" id="PTHR10806">
    <property type="entry name" value="SIGNAL PEPTIDASE COMPLEX CATALYTIC SUBUNIT SEC11"/>
    <property type="match status" value="1"/>
</dbReference>
<dbReference type="PANTHER" id="PTHR10806:SF6">
    <property type="entry name" value="SIGNAL PEPTIDASE COMPLEX CATALYTIC SUBUNIT SEC11"/>
    <property type="match status" value="1"/>
</dbReference>
<dbReference type="SUPFAM" id="SSF51306">
    <property type="entry name" value="LexA/Signal peptidase"/>
    <property type="match status" value="1"/>
</dbReference>
<dbReference type="PROSITE" id="PS00501">
    <property type="entry name" value="SPASE_I_1"/>
    <property type="match status" value="1"/>
</dbReference>
<protein>
    <recommendedName>
        <fullName>Signal peptidase complex catalytic subunit SEC11</fullName>
        <ecNumber evidence="1">3.4.21.89</ecNumber>
    </recommendedName>
    <alternativeName>
        <fullName>Signal peptidase I</fullName>
    </alternativeName>
</protein>
<evidence type="ECO:0000250" key="1">
    <source>
        <dbReference type="UniProtKB" id="P15367"/>
    </source>
</evidence>
<evidence type="ECO:0000250" key="2">
    <source>
        <dbReference type="UniProtKB" id="P67812"/>
    </source>
</evidence>
<evidence type="ECO:0000255" key="3"/>
<evidence type="ECO:0000256" key="4">
    <source>
        <dbReference type="SAM" id="MobiDB-lite"/>
    </source>
</evidence>
<evidence type="ECO:0000305" key="5"/>
<sequence length="210" mass="22889">MLSSLSPHLSNVRQTLTQVLNFALVLSTAFMMWKALSIYTNSSSPIVVVLSGSMEPAFQRGDLLFLWNRSPRAEVGEIVVYNVRGKDIPIVHRVVRAFGDDARDPKEGGGKKGKSASGTGKKESVAAGAVHSDSSFVSHKLLTKGDNNIADDTELYARGQDYLDRKVDLVGSVRGYIPAVGYVTIMLSEHPWLKSVLLGLMGVMVILQRE</sequence>
<proteinExistence type="inferred from homology"/>
<feature type="chain" id="PRO_0000412370" description="Signal peptidase complex catalytic subunit SEC11">
    <location>
        <begin position="1"/>
        <end position="210"/>
    </location>
</feature>
<feature type="topological domain" description="Cytoplasmic" evidence="5">
    <location>
        <begin position="1"/>
        <end position="14"/>
    </location>
</feature>
<feature type="transmembrane region" description="Helical; Signal-anchor for type II membrane protein" evidence="3">
    <location>
        <begin position="15"/>
        <end position="31"/>
    </location>
</feature>
<feature type="topological domain" description="Lumenal" evidence="5">
    <location>
        <begin position="32"/>
        <end position="210"/>
    </location>
</feature>
<feature type="region of interest" description="Disordered" evidence="4">
    <location>
        <begin position="101"/>
        <end position="124"/>
    </location>
</feature>
<feature type="region of interest" description="C-terminal short (CTS) helix" evidence="2">
    <location>
        <begin position="196"/>
        <end position="207"/>
    </location>
</feature>
<feature type="compositionally biased region" description="Basic and acidic residues" evidence="4">
    <location>
        <begin position="101"/>
        <end position="110"/>
    </location>
</feature>
<feature type="active site" description="Charge relay system" evidence="1">
    <location>
        <position position="53"/>
    </location>
</feature>
<feature type="active site" description="Charge relay system" evidence="1">
    <location>
        <position position="92"/>
    </location>
</feature>
<feature type="active site" description="Charge relay system" evidence="1">
    <location>
        <position position="152"/>
    </location>
</feature>
<feature type="glycosylation site" description="N-linked (GlcNAc...) asparagine" evidence="3">
    <location>
        <position position="41"/>
    </location>
</feature>
<name>SEC11_UNCRE</name>
<accession>C4JYM4</accession>
<gene>
    <name type="primary">SEC11</name>
    <name type="ORF">UREG_07275</name>
</gene>